<keyword id="KW-1185">Reference proteome</keyword>
<keyword id="KW-0687">Ribonucleoprotein</keyword>
<keyword id="KW-0689">Ribosomal protein</keyword>
<accession>B1I1L7</accession>
<reference key="1">
    <citation type="submission" date="2007-10" db="EMBL/GenBank/DDBJ databases">
        <title>Complete sequence of chromosome of Desulforudis audaxviator MP104C.</title>
        <authorList>
            <person name="Copeland A."/>
            <person name="Lucas S."/>
            <person name="Lapidus A."/>
            <person name="Barry K."/>
            <person name="Glavina del Rio T."/>
            <person name="Dalin E."/>
            <person name="Tice H."/>
            <person name="Bruce D."/>
            <person name="Pitluck S."/>
            <person name="Lowry S.R."/>
            <person name="Larimer F."/>
            <person name="Land M.L."/>
            <person name="Hauser L."/>
            <person name="Kyrpides N."/>
            <person name="Ivanova N.N."/>
            <person name="Richardson P."/>
        </authorList>
    </citation>
    <scope>NUCLEOTIDE SEQUENCE [LARGE SCALE GENOMIC DNA]</scope>
    <source>
        <strain>MP104C</strain>
    </source>
</reference>
<sequence>MAEKKKSKLKITLVKSLIGRPETQRRTVRALGLTRMHQTVEQNDVPQIRGMVNRIRHLVKVEEA</sequence>
<feature type="chain" id="PRO_0000347097" description="Large ribosomal subunit protein uL30">
    <location>
        <begin position="1"/>
        <end position="64"/>
    </location>
</feature>
<comment type="subunit">
    <text evidence="1">Part of the 50S ribosomal subunit.</text>
</comment>
<comment type="similarity">
    <text evidence="1">Belongs to the universal ribosomal protein uL30 family.</text>
</comment>
<comment type="sequence caution" evidence="2">
    <conflict type="erroneous initiation">
        <sequence resource="EMBL-CDS" id="ACA58804"/>
    </conflict>
</comment>
<gene>
    <name evidence="1" type="primary">rpmD</name>
    <name type="ordered locus">Daud_0243</name>
</gene>
<name>RL30_DESAP</name>
<organism>
    <name type="scientific">Desulforudis audaxviator (strain MP104C)</name>
    <dbReference type="NCBI Taxonomy" id="477974"/>
    <lineage>
        <taxon>Bacteria</taxon>
        <taxon>Bacillati</taxon>
        <taxon>Bacillota</taxon>
        <taxon>Clostridia</taxon>
        <taxon>Thermoanaerobacterales</taxon>
        <taxon>Candidatus Desulforudaceae</taxon>
        <taxon>Candidatus Desulforudis</taxon>
    </lineage>
</organism>
<evidence type="ECO:0000255" key="1">
    <source>
        <dbReference type="HAMAP-Rule" id="MF_01371"/>
    </source>
</evidence>
<evidence type="ECO:0000305" key="2"/>
<protein>
    <recommendedName>
        <fullName evidence="1">Large ribosomal subunit protein uL30</fullName>
    </recommendedName>
    <alternativeName>
        <fullName evidence="2">50S ribosomal protein L30</fullName>
    </alternativeName>
</protein>
<dbReference type="EMBL" id="CP000860">
    <property type="protein sequence ID" value="ACA58804.1"/>
    <property type="status" value="ALT_INIT"/>
    <property type="molecule type" value="Genomic_DNA"/>
</dbReference>
<dbReference type="RefSeq" id="WP_041570711.1">
    <property type="nucleotide sequence ID" value="NC_010424.1"/>
</dbReference>
<dbReference type="SMR" id="B1I1L7"/>
<dbReference type="STRING" id="477974.Daud_0243"/>
<dbReference type="KEGG" id="dau:Daud_0243"/>
<dbReference type="eggNOG" id="COG1841">
    <property type="taxonomic scope" value="Bacteria"/>
</dbReference>
<dbReference type="HOGENOM" id="CLU_131047_2_1_9"/>
<dbReference type="Proteomes" id="UP000008544">
    <property type="component" value="Chromosome"/>
</dbReference>
<dbReference type="GO" id="GO:0022625">
    <property type="term" value="C:cytosolic large ribosomal subunit"/>
    <property type="evidence" value="ECO:0007669"/>
    <property type="project" value="TreeGrafter"/>
</dbReference>
<dbReference type="GO" id="GO:0003735">
    <property type="term" value="F:structural constituent of ribosome"/>
    <property type="evidence" value="ECO:0007669"/>
    <property type="project" value="InterPro"/>
</dbReference>
<dbReference type="GO" id="GO:0006412">
    <property type="term" value="P:translation"/>
    <property type="evidence" value="ECO:0007669"/>
    <property type="project" value="UniProtKB-UniRule"/>
</dbReference>
<dbReference type="CDD" id="cd01658">
    <property type="entry name" value="Ribosomal_L30"/>
    <property type="match status" value="1"/>
</dbReference>
<dbReference type="FunFam" id="3.30.1390.20:FF:000001">
    <property type="entry name" value="50S ribosomal protein L30"/>
    <property type="match status" value="1"/>
</dbReference>
<dbReference type="Gene3D" id="3.30.1390.20">
    <property type="entry name" value="Ribosomal protein L30, ferredoxin-like fold domain"/>
    <property type="match status" value="1"/>
</dbReference>
<dbReference type="HAMAP" id="MF_01371_B">
    <property type="entry name" value="Ribosomal_uL30_B"/>
    <property type="match status" value="1"/>
</dbReference>
<dbReference type="InterPro" id="IPR036919">
    <property type="entry name" value="Ribo_uL30_ferredoxin-like_sf"/>
</dbReference>
<dbReference type="InterPro" id="IPR005996">
    <property type="entry name" value="Ribosomal_uL30_bac-type"/>
</dbReference>
<dbReference type="InterPro" id="IPR018038">
    <property type="entry name" value="Ribosomal_uL30_CS"/>
</dbReference>
<dbReference type="InterPro" id="IPR016082">
    <property type="entry name" value="Ribosomal_uL30_ferredoxin-like"/>
</dbReference>
<dbReference type="NCBIfam" id="TIGR01308">
    <property type="entry name" value="rpmD_bact"/>
    <property type="match status" value="1"/>
</dbReference>
<dbReference type="PANTHER" id="PTHR15892:SF2">
    <property type="entry name" value="LARGE RIBOSOMAL SUBUNIT PROTEIN UL30M"/>
    <property type="match status" value="1"/>
</dbReference>
<dbReference type="PANTHER" id="PTHR15892">
    <property type="entry name" value="MITOCHONDRIAL RIBOSOMAL PROTEIN L30"/>
    <property type="match status" value="1"/>
</dbReference>
<dbReference type="Pfam" id="PF00327">
    <property type="entry name" value="Ribosomal_L30"/>
    <property type="match status" value="1"/>
</dbReference>
<dbReference type="PIRSF" id="PIRSF002211">
    <property type="entry name" value="Ribosomal_L30_bac-type"/>
    <property type="match status" value="1"/>
</dbReference>
<dbReference type="SUPFAM" id="SSF55129">
    <property type="entry name" value="Ribosomal protein L30p/L7e"/>
    <property type="match status" value="1"/>
</dbReference>
<dbReference type="PROSITE" id="PS00634">
    <property type="entry name" value="RIBOSOMAL_L30"/>
    <property type="match status" value="1"/>
</dbReference>
<proteinExistence type="inferred from homology"/>